<dbReference type="EC" id="2.5.1.31"/>
<dbReference type="EMBL" id="U70214">
    <property type="protein sequence ID" value="AAB08603.1"/>
    <property type="status" value="ALT_INIT"/>
    <property type="molecule type" value="Genomic_DNA"/>
</dbReference>
<dbReference type="EMBL" id="U00096">
    <property type="protein sequence ID" value="AAC73285.1"/>
    <property type="molecule type" value="Genomic_DNA"/>
</dbReference>
<dbReference type="EMBL" id="AP009048">
    <property type="protein sequence ID" value="BAA77849.2"/>
    <property type="molecule type" value="Genomic_DNA"/>
</dbReference>
<dbReference type="PIR" id="F64741">
    <property type="entry name" value="F64741"/>
</dbReference>
<dbReference type="RefSeq" id="NP_414716.1">
    <property type="nucleotide sequence ID" value="NC_000913.3"/>
</dbReference>
<dbReference type="PDB" id="1JP3">
    <property type="method" value="X-ray"/>
    <property type="resolution" value="1.80 A"/>
    <property type="chains" value="A/B=1-253"/>
</dbReference>
<dbReference type="PDB" id="1UEH">
    <property type="method" value="X-ray"/>
    <property type="resolution" value="1.73 A"/>
    <property type="chains" value="A/B=1-253"/>
</dbReference>
<dbReference type="PDB" id="1V7U">
    <property type="method" value="X-ray"/>
    <property type="resolution" value="2.35 A"/>
    <property type="chains" value="A/B=1-253"/>
</dbReference>
<dbReference type="PDB" id="1X06">
    <property type="method" value="X-ray"/>
    <property type="resolution" value="1.90 A"/>
    <property type="chains" value="A=1-253"/>
</dbReference>
<dbReference type="PDB" id="1X07">
    <property type="method" value="X-ray"/>
    <property type="resolution" value="2.20 A"/>
    <property type="chains" value="A=1-253"/>
</dbReference>
<dbReference type="PDB" id="1X08">
    <property type="method" value="X-ray"/>
    <property type="resolution" value="1.90 A"/>
    <property type="chains" value="A=1-253"/>
</dbReference>
<dbReference type="PDB" id="1X09">
    <property type="method" value="X-ray"/>
    <property type="resolution" value="1.87 A"/>
    <property type="chains" value="A=1-253"/>
</dbReference>
<dbReference type="PDB" id="2E98">
    <property type="method" value="X-ray"/>
    <property type="resolution" value="1.90 A"/>
    <property type="chains" value="A/B=1-253"/>
</dbReference>
<dbReference type="PDB" id="2E99">
    <property type="method" value="X-ray"/>
    <property type="resolution" value="2.00 A"/>
    <property type="chains" value="A/B=1-253"/>
</dbReference>
<dbReference type="PDB" id="2E9A">
    <property type="method" value="X-ray"/>
    <property type="resolution" value="2.10 A"/>
    <property type="chains" value="A/B=1-253"/>
</dbReference>
<dbReference type="PDB" id="2E9C">
    <property type="method" value="X-ray"/>
    <property type="resolution" value="2.05 A"/>
    <property type="chains" value="A/B=1-253"/>
</dbReference>
<dbReference type="PDB" id="2E9D">
    <property type="method" value="X-ray"/>
    <property type="resolution" value="2.50 A"/>
    <property type="chains" value="A/B=1-253"/>
</dbReference>
<dbReference type="PDB" id="3QAS">
    <property type="method" value="X-ray"/>
    <property type="resolution" value="1.70 A"/>
    <property type="chains" value="A/B=1-253"/>
</dbReference>
<dbReference type="PDB" id="3SGV">
    <property type="method" value="X-ray"/>
    <property type="resolution" value="1.61 A"/>
    <property type="chains" value="A/B=1-253"/>
</dbReference>
<dbReference type="PDB" id="3SGX">
    <property type="method" value="X-ray"/>
    <property type="resolution" value="2.45 A"/>
    <property type="chains" value="A/B=1-253"/>
</dbReference>
<dbReference type="PDB" id="3SH0">
    <property type="method" value="X-ray"/>
    <property type="resolution" value="1.84 A"/>
    <property type="chains" value="A/B=1-253"/>
</dbReference>
<dbReference type="PDB" id="3TH8">
    <property type="method" value="X-ray"/>
    <property type="resolution" value="2.11 A"/>
    <property type="chains" value="A/B=1-253"/>
</dbReference>
<dbReference type="PDB" id="3WYJ">
    <property type="method" value="X-ray"/>
    <property type="resolution" value="2.10 A"/>
    <property type="chains" value="A/B=1-253"/>
</dbReference>
<dbReference type="PDB" id="4H2J">
    <property type="method" value="X-ray"/>
    <property type="resolution" value="1.81 A"/>
    <property type="chains" value="A/B=1-253"/>
</dbReference>
<dbReference type="PDB" id="4H2M">
    <property type="method" value="X-ray"/>
    <property type="resolution" value="1.78 A"/>
    <property type="chains" value="A/B=1-253"/>
</dbReference>
<dbReference type="PDB" id="4H2O">
    <property type="method" value="X-ray"/>
    <property type="resolution" value="2.14 A"/>
    <property type="chains" value="A/B=1-253"/>
</dbReference>
<dbReference type="PDB" id="4H38">
    <property type="method" value="X-ray"/>
    <property type="resolution" value="1.95 A"/>
    <property type="chains" value="A/B=1-253"/>
</dbReference>
<dbReference type="PDB" id="4H3A">
    <property type="method" value="X-ray"/>
    <property type="resolution" value="1.98 A"/>
    <property type="chains" value="A/B=1-253"/>
</dbReference>
<dbReference type="PDB" id="4H3C">
    <property type="method" value="X-ray"/>
    <property type="resolution" value="1.93 A"/>
    <property type="chains" value="A/B=1-253"/>
</dbReference>
<dbReference type="PDB" id="5CQB">
    <property type="method" value="X-ray"/>
    <property type="resolution" value="2.20 A"/>
    <property type="chains" value="A/B=2-253"/>
</dbReference>
<dbReference type="PDB" id="5CQJ">
    <property type="method" value="X-ray"/>
    <property type="resolution" value="2.15 A"/>
    <property type="chains" value="A/B=1-253"/>
</dbReference>
<dbReference type="PDB" id="5ZHE">
    <property type="method" value="X-ray"/>
    <property type="resolution" value="2.18 A"/>
    <property type="chains" value="A/B=1-253"/>
</dbReference>
<dbReference type="PDBsum" id="1JP3"/>
<dbReference type="PDBsum" id="1UEH"/>
<dbReference type="PDBsum" id="1V7U"/>
<dbReference type="PDBsum" id="1X06"/>
<dbReference type="PDBsum" id="1X07"/>
<dbReference type="PDBsum" id="1X08"/>
<dbReference type="PDBsum" id="1X09"/>
<dbReference type="PDBsum" id="2E98"/>
<dbReference type="PDBsum" id="2E99"/>
<dbReference type="PDBsum" id="2E9A"/>
<dbReference type="PDBsum" id="2E9C"/>
<dbReference type="PDBsum" id="2E9D"/>
<dbReference type="PDBsum" id="3QAS"/>
<dbReference type="PDBsum" id="3SGV"/>
<dbReference type="PDBsum" id="3SGX"/>
<dbReference type="PDBsum" id="3SH0"/>
<dbReference type="PDBsum" id="3TH8"/>
<dbReference type="PDBsum" id="3WYJ"/>
<dbReference type="PDBsum" id="4H2J"/>
<dbReference type="PDBsum" id="4H2M"/>
<dbReference type="PDBsum" id="4H2O"/>
<dbReference type="PDBsum" id="4H38"/>
<dbReference type="PDBsum" id="4H3A"/>
<dbReference type="PDBsum" id="4H3C"/>
<dbReference type="PDBsum" id="5CQB"/>
<dbReference type="PDBsum" id="5CQJ"/>
<dbReference type="PDBsum" id="5ZHE"/>
<dbReference type="SMR" id="P60472"/>
<dbReference type="BioGRID" id="4260767">
    <property type="interactions" value="422"/>
</dbReference>
<dbReference type="DIP" id="DIP-48251N"/>
<dbReference type="FunCoup" id="P60472">
    <property type="interactions" value="723"/>
</dbReference>
<dbReference type="IntAct" id="P60472">
    <property type="interactions" value="4"/>
</dbReference>
<dbReference type="STRING" id="511145.b0174"/>
<dbReference type="BindingDB" id="P60472"/>
<dbReference type="ChEMBL" id="CHEMBL4295580"/>
<dbReference type="DrugBank" id="DB07409">
    <property type="generic name" value="(1-HYDROXY-1-PHOSPHONO-2-[1,1';4',1'']TERPHENYL-3-YL-ETHYL)-PHOSPHONIC ACID"/>
</dbReference>
<dbReference type="DrugBank" id="DB07426">
    <property type="generic name" value="[1-HYDROXY-2-(1,1':3',1''-TERPHENYL-3-YLOXY)ETHANE-1,1-DIYL]BIS(PHOSPHONIC ACID)"/>
</dbReference>
<dbReference type="DrugBank" id="DB07410">
    <property type="generic name" value="[2-(3-DIBENZOFURAN-4-YL-PHENYL)-1-HYDROXY-1-PHOSPHONO-ETHYL]-PHOSPHONIC ACID"/>
</dbReference>
<dbReference type="DrugBank" id="DB07404">
    <property type="generic name" value="BPH-608"/>
</dbReference>
<dbReference type="DrugBank" id="DB07780">
    <property type="generic name" value="Farnesyl diphosphate"/>
</dbReference>
<dbReference type="DrugBank" id="DB04695">
    <property type="generic name" value="Farnesyl thiopyrophosphate"/>
</dbReference>
<dbReference type="DrugBank" id="DB04714">
    <property type="generic name" value="ISOPENTENYL PYROPHOSPHATE"/>
</dbReference>
<dbReference type="SwissLipids" id="SLP:000001809"/>
<dbReference type="jPOST" id="P60472"/>
<dbReference type="PaxDb" id="511145-b0174"/>
<dbReference type="EnsemblBacteria" id="AAC73285">
    <property type="protein sequence ID" value="AAC73285"/>
    <property type="gene ID" value="b0174"/>
</dbReference>
<dbReference type="GeneID" id="944874"/>
<dbReference type="KEGG" id="ecj:JW0169"/>
<dbReference type="KEGG" id="eco:b0174"/>
<dbReference type="PATRIC" id="fig|511145.12.peg.180"/>
<dbReference type="EchoBASE" id="EB3113"/>
<dbReference type="eggNOG" id="COG0020">
    <property type="taxonomic scope" value="Bacteria"/>
</dbReference>
<dbReference type="HOGENOM" id="CLU_038505_1_1_6"/>
<dbReference type="InParanoid" id="P60472"/>
<dbReference type="OMA" id="FDRRDLW"/>
<dbReference type="PhylomeDB" id="P60472"/>
<dbReference type="BioCyc" id="EcoCyc:UPPSYN-MONOMER"/>
<dbReference type="BioCyc" id="MetaCyc:UPPSYN-MONOMER"/>
<dbReference type="BRENDA" id="2.5.1.31">
    <property type="organism ID" value="2026"/>
</dbReference>
<dbReference type="SABIO-RK" id="P60472"/>
<dbReference type="EvolutionaryTrace" id="P60472"/>
<dbReference type="PRO" id="PR:P60472"/>
<dbReference type="Proteomes" id="UP000000625">
    <property type="component" value="Chromosome"/>
</dbReference>
<dbReference type="GO" id="GO:0005737">
    <property type="term" value="C:cytoplasm"/>
    <property type="evidence" value="ECO:0000314"/>
    <property type="project" value="EcoCyc"/>
</dbReference>
<dbReference type="GO" id="GO:0005829">
    <property type="term" value="C:cytosol"/>
    <property type="evidence" value="ECO:0000314"/>
    <property type="project" value="EcoCyc"/>
</dbReference>
<dbReference type="GO" id="GO:0008834">
    <property type="term" value="F:ditrans,polycis-undecaprenyl-diphosphate synthase [(2E,6E)-farnesyl-diphosphate specific] activity"/>
    <property type="evidence" value="ECO:0000314"/>
    <property type="project" value="EcoCyc"/>
</dbReference>
<dbReference type="GO" id="GO:0000287">
    <property type="term" value="F:magnesium ion binding"/>
    <property type="evidence" value="ECO:0000314"/>
    <property type="project" value="EcoCyc"/>
</dbReference>
<dbReference type="GO" id="GO:0042803">
    <property type="term" value="F:protein homodimerization activity"/>
    <property type="evidence" value="ECO:0000314"/>
    <property type="project" value="EcoCyc"/>
</dbReference>
<dbReference type="GO" id="GO:0036094">
    <property type="term" value="F:small molecule binding"/>
    <property type="evidence" value="ECO:0000269"/>
    <property type="project" value="DisProt"/>
</dbReference>
<dbReference type="GO" id="GO:0051301">
    <property type="term" value="P:cell division"/>
    <property type="evidence" value="ECO:0007669"/>
    <property type="project" value="UniProtKB-KW"/>
</dbReference>
<dbReference type="GO" id="GO:0071555">
    <property type="term" value="P:cell wall organization"/>
    <property type="evidence" value="ECO:0007669"/>
    <property type="project" value="UniProtKB-KW"/>
</dbReference>
<dbReference type="GO" id="GO:0043164">
    <property type="term" value="P:Gram-negative-bacterium-type cell wall biogenesis"/>
    <property type="evidence" value="ECO:0000315"/>
    <property type="project" value="EcoCyc"/>
</dbReference>
<dbReference type="GO" id="GO:0009252">
    <property type="term" value="P:peptidoglycan biosynthetic process"/>
    <property type="evidence" value="ECO:0000315"/>
    <property type="project" value="EcoCyc"/>
</dbReference>
<dbReference type="GO" id="GO:0016094">
    <property type="term" value="P:polyprenol biosynthetic process"/>
    <property type="evidence" value="ECO:0000314"/>
    <property type="project" value="EcoCyc"/>
</dbReference>
<dbReference type="GO" id="GO:0008360">
    <property type="term" value="P:regulation of cell shape"/>
    <property type="evidence" value="ECO:0007669"/>
    <property type="project" value="UniProtKB-KW"/>
</dbReference>
<dbReference type="CDD" id="cd00475">
    <property type="entry name" value="Cis_IPPS"/>
    <property type="match status" value="1"/>
</dbReference>
<dbReference type="DisProt" id="DP00516"/>
<dbReference type="FunFam" id="3.40.1180.10:FF:000001">
    <property type="entry name" value="(2E,6E)-farnesyl-diphosphate-specific ditrans,polycis-undecaprenyl-diphosphate synthase"/>
    <property type="match status" value="1"/>
</dbReference>
<dbReference type="Gene3D" id="3.40.1180.10">
    <property type="entry name" value="Decaprenyl diphosphate synthase-like"/>
    <property type="match status" value="1"/>
</dbReference>
<dbReference type="HAMAP" id="MF_01139">
    <property type="entry name" value="ISPT"/>
    <property type="match status" value="1"/>
</dbReference>
<dbReference type="InterPro" id="IPR001441">
    <property type="entry name" value="UPP_synth-like"/>
</dbReference>
<dbReference type="InterPro" id="IPR018520">
    <property type="entry name" value="UPP_synth-like_CS"/>
</dbReference>
<dbReference type="InterPro" id="IPR036424">
    <property type="entry name" value="UPP_synth-like_sf"/>
</dbReference>
<dbReference type="NCBIfam" id="NF007596">
    <property type="entry name" value="PRK10240.1"/>
    <property type="match status" value="1"/>
</dbReference>
<dbReference type="NCBIfam" id="NF011405">
    <property type="entry name" value="PRK14830.1"/>
    <property type="match status" value="1"/>
</dbReference>
<dbReference type="NCBIfam" id="TIGR00055">
    <property type="entry name" value="uppS"/>
    <property type="match status" value="1"/>
</dbReference>
<dbReference type="PANTHER" id="PTHR10291:SF0">
    <property type="entry name" value="DEHYDRODOLICHYL DIPHOSPHATE SYNTHASE 2"/>
    <property type="match status" value="1"/>
</dbReference>
<dbReference type="PANTHER" id="PTHR10291">
    <property type="entry name" value="DEHYDRODOLICHYL DIPHOSPHATE SYNTHASE FAMILY MEMBER"/>
    <property type="match status" value="1"/>
</dbReference>
<dbReference type="Pfam" id="PF01255">
    <property type="entry name" value="Prenyltransf"/>
    <property type="match status" value="1"/>
</dbReference>
<dbReference type="SUPFAM" id="SSF64005">
    <property type="entry name" value="Undecaprenyl diphosphate synthase"/>
    <property type="match status" value="1"/>
</dbReference>
<dbReference type="PROSITE" id="PS01066">
    <property type="entry name" value="UPP_SYNTHASE"/>
    <property type="match status" value="1"/>
</dbReference>
<comment type="function">
    <text evidence="5">Generates ditrans,octacis-undecaprenyl pyrophosphate (UPP) from isopentenyl pyrophosphate (IPP) and farnesyl diphosphate (FPP). UPP is the precursor of glycosyl carrier lipid in the biosynthesis of bacterial cell wall polysaccharide components such as peptidoglycan and lipopolysaccharide.</text>
</comment>
<comment type="catalytic activity">
    <reaction>
        <text>8 isopentenyl diphosphate + (2E,6E)-farnesyl diphosphate = di-trans,octa-cis-undecaprenyl diphosphate + 8 diphosphate</text>
        <dbReference type="Rhea" id="RHEA:27551"/>
        <dbReference type="ChEBI" id="CHEBI:33019"/>
        <dbReference type="ChEBI" id="CHEBI:58405"/>
        <dbReference type="ChEBI" id="CHEBI:128769"/>
        <dbReference type="ChEBI" id="CHEBI:175763"/>
        <dbReference type="EC" id="2.5.1.31"/>
    </reaction>
</comment>
<comment type="cofactor">
    <cofactor evidence="5 6">
        <name>Mg(2+)</name>
        <dbReference type="ChEBI" id="CHEBI:18420"/>
    </cofactor>
    <text evidence="5 6">Binds 2 magnesium ions per subunit.</text>
</comment>
<comment type="activity regulation">
    <text evidence="8">Inhibited by bisphosphonates.</text>
</comment>
<comment type="biophysicochemical properties">
    <kinetics>
        <KM evidence="5">0.4 uM for FPP (at pH 7.5 and at 25 degrees Celsius)</KM>
        <KM evidence="5">4.1 uM for IPP (at pH 7.5 and at 25 degrees Celsius)</KM>
    </kinetics>
</comment>
<comment type="subunit">
    <text evidence="3 5 6 7 8 9">Homodimer.</text>
</comment>
<comment type="similarity">
    <text evidence="10">Belongs to the UPP synthase family.</text>
</comment>
<comment type="sequence caution" evidence="10">
    <conflict type="erroneous initiation">
        <sequence resource="EMBL-CDS" id="AAB08603"/>
    </conflict>
    <text>Truncated N-terminus.</text>
</comment>
<proteinExistence type="evidence at protein level"/>
<sequence length="253" mass="28444">MMLSATQPLSEKLPAHGCRHVAIIMDGNGRWAKKQGKIRAFGHKAGAKSVRRAVSFAANNGIEALTLYAFSSENWNRPAQEVSALMELFVWALDSEVKSLHRHNVRLRIIGDTSRFNSRLQERIRKSEALTAGNTGLTLNIAANYGGRWDIVQGVRQLAEKVQQGNLQPDQIDEEMLNQHVCMHELAPVDLVIRTGGEHRISNFLLWQIAYAELYFTDVLWPDFDEQDFEGALNAFANRERRFGGTEPGDETA</sequence>
<feature type="chain" id="PRO_0000123609" description="Ditrans,polycis-undecaprenyl-diphosphate synthase ((2E,6E)-farnesyl-diphosphate specific)">
    <location>
        <begin position="1"/>
        <end position="253"/>
    </location>
</feature>
<feature type="active site">
    <location>
        <position position="26"/>
    </location>
</feature>
<feature type="active site" description="Proton acceptor" evidence="1">
    <location>
        <position position="74"/>
    </location>
</feature>
<feature type="binding site">
    <location>
        <begin position="26"/>
        <end position="30"/>
    </location>
    <ligand>
        <name>substrate</name>
    </ligand>
</feature>
<feature type="binding site">
    <location>
        <position position="26"/>
    </location>
    <ligand>
        <name>Mg(2+)</name>
        <dbReference type="ChEBI" id="CHEBI:18420"/>
    </ligand>
</feature>
<feature type="binding site" evidence="11">
    <location>
        <position position="31"/>
    </location>
    <ligand>
        <name>substrate</name>
    </ligand>
</feature>
<feature type="binding site" evidence="6">
    <location>
        <position position="39"/>
    </location>
    <ligand>
        <name>substrate</name>
    </ligand>
</feature>
<feature type="binding site" evidence="6">
    <location>
        <position position="43"/>
    </location>
    <ligand>
        <name>substrate</name>
    </ligand>
</feature>
<feature type="binding site" evidence="1">
    <location>
        <begin position="71"/>
        <end position="73"/>
    </location>
    <ligand>
        <name>substrate</name>
    </ligand>
</feature>
<feature type="binding site" evidence="11">
    <location>
        <position position="75"/>
    </location>
    <ligand>
        <name>substrate</name>
    </ligand>
</feature>
<feature type="binding site" evidence="6">
    <location>
        <position position="77"/>
    </location>
    <ligand>
        <name>substrate</name>
    </ligand>
</feature>
<feature type="binding site" evidence="6">
    <location>
        <position position="194"/>
    </location>
    <ligand>
        <name>substrate</name>
    </ligand>
</feature>
<feature type="binding site">
    <location>
        <position position="199"/>
    </location>
    <ligand>
        <name>Mg(2+)</name>
        <dbReference type="ChEBI" id="CHEBI:18420"/>
    </ligand>
</feature>
<feature type="binding site">
    <location>
        <begin position="200"/>
        <end position="202"/>
    </location>
    <ligand>
        <name>substrate</name>
    </ligand>
</feature>
<feature type="binding site">
    <location>
        <position position="213"/>
    </location>
    <ligand>
        <name>isopentenyl diphosphate</name>
        <dbReference type="ChEBI" id="CHEBI:128769"/>
    </ligand>
</feature>
<feature type="binding site">
    <location>
        <position position="213"/>
    </location>
    <ligand>
        <name>Mg(2+)</name>
        <dbReference type="ChEBI" id="CHEBI:18420"/>
    </ligand>
</feature>
<feature type="site" description="Required for continued chain elongation">
    <location>
        <position position="69"/>
    </location>
</feature>
<feature type="site" description="Important for determining product length">
    <location>
        <position position="137"/>
    </location>
</feature>
<feature type="mutagenesis site" description="Great decrease in activity." evidence="2">
    <original>D</original>
    <variation>A</variation>
    <location>
        <position position="26"/>
    </location>
</feature>
<feature type="mutagenesis site" description="Decrease in activity; reduced affinity for decaprenyl diphosphate substrate analog." evidence="4">
    <original>W</original>
    <variation>F</variation>
    <location>
        <position position="31"/>
    </location>
</feature>
<feature type="mutagenesis site" description="Great decreases in the catalytic efficiency and the affinity for FPP and IPP." evidence="5">
    <original>H</original>
    <variation>A</variation>
    <location>
        <position position="43"/>
    </location>
</feature>
<feature type="mutagenesis site" description="Formation predominantly of C(60) and C(65) polymers rather than the C(55) polymer." evidence="3">
    <original>I</original>
    <variation>A</variation>
    <location>
        <position position="62"/>
    </location>
</feature>
<feature type="mutagenesis site" description="Produces shorter polymers." evidence="3">
    <original>A</original>
    <variation>L</variation>
    <location>
        <position position="69"/>
    </location>
</feature>
<feature type="mutagenesis site" description="Decrease in activity." evidence="3">
    <original>S</original>
    <variation>A</variation>
    <location>
        <position position="71"/>
    </location>
</feature>
<feature type="mutagenesis site" description="Slight decrease in activity." evidence="2 3">
    <original>E</original>
    <variation>A</variation>
    <location>
        <position position="73"/>
    </location>
</feature>
<feature type="mutagenesis site" description="Decrease in activity." evidence="3">
    <original>N</original>
    <variation>A</variation>
    <location>
        <position position="74"/>
    </location>
</feature>
<feature type="mutagenesis site" description="Decrease in activity; reduced affinity for decaprenyl diphosphate substrate analog." evidence="3 4">
    <original>W</original>
    <variation>A</variation>
    <variation>F</variation>
    <location>
        <position position="75"/>
    </location>
</feature>
<feature type="mutagenesis site" description="Decrease in activity." evidence="3">
    <original>R</original>
    <variation>A</variation>
    <location>
        <position position="77"/>
    </location>
</feature>
<feature type="mutagenesis site" description="Slight decrease in activity." evidence="3">
    <original>E</original>
    <variation>A</variation>
    <location>
        <position position="81"/>
    </location>
</feature>
<feature type="mutagenesis site" description="Decrease in affinity for IPP." evidence="4">
    <original>W</original>
    <variation>F</variation>
    <location>
        <position position="91"/>
    </location>
</feature>
<feature type="mutagenesis site" description="No effect." evidence="3">
    <original>H</original>
    <variation>A</variation>
    <location>
        <position position="103"/>
    </location>
</feature>
<feature type="mutagenesis site" description="Formation predominantly of C(60), C(65) and C(70) polymers rather than the C(55) polymer." evidence="3">
    <original>V</original>
    <variation>A</variation>
    <location>
        <position position="105"/>
    </location>
</feature>
<feature type="mutagenesis site" description="Formation predominantly of a C(70) polymer rather than the C(55) polymer." evidence="3">
    <original>L</original>
    <variation>A</variation>
    <location>
        <position position="137"/>
    </location>
</feature>
<feature type="mutagenesis site" description="No effect on polymer length." evidence="3">
    <original>A</original>
    <variation>V</variation>
    <location>
        <position position="143"/>
    </location>
</feature>
<feature type="mutagenesis site" description="Decrease in affinity for IPP." evidence="4">
    <original>W</original>
    <variation>F</variation>
    <location>
        <position position="149"/>
    </location>
</feature>
<feature type="mutagenesis site" description="Great decrease in affinity for the substrate." evidence="2">
    <original>D</original>
    <variation>A</variation>
    <location>
        <position position="150"/>
    </location>
</feature>
<feature type="mutagenesis site" description="No effect." evidence="2">
    <original>D</original>
    <variation>A</variation>
    <location>
        <position position="190"/>
    </location>
</feature>
<feature type="mutagenesis site" description="No effect." evidence="2">
    <original>E</original>
    <variation>A</variation>
    <location>
        <position position="198"/>
    </location>
</feature>
<feature type="mutagenesis site" description="Great decreases in the catalytic efficiency and in the affinity for IPP; when associated with A-213." evidence="5">
    <original>H</original>
    <variation>A</variation>
    <location>
        <position position="199"/>
    </location>
</feature>
<feature type="mutagenesis site" description="Decrease in affinity for both IPP and decaprenyl diphosphate substrate analog." evidence="4">
    <original>W</original>
    <variation>F</variation>
    <location>
        <position position="207"/>
    </location>
</feature>
<feature type="mutagenesis site" description="Great decrease in activity; reduced affinity for IPP. Great decreases in the catalytic efficiency and in the affinity for IPP; when associated with A-199." evidence="2 5">
    <original>E</original>
    <variation>A</variation>
    <location>
        <position position="213"/>
    </location>
</feature>
<feature type="mutagenesis site" description="Slight decrease in activity." evidence="2">
    <original>D</original>
    <variation>A</variation>
    <location>
        <position position="218"/>
    </location>
</feature>
<feature type="mutagenesis site" description="Decrease in affinity for IPP." evidence="4">
    <original>W</original>
    <variation>F</variation>
    <location>
        <position position="221"/>
    </location>
</feature>
<feature type="mutagenesis site" description="No effect." evidence="2">
    <original>D</original>
    <variation>A</variation>
    <location>
        <position position="223"/>
    </location>
</feature>
<feature type="helix" evidence="12">
    <location>
        <begin position="15"/>
        <end position="17"/>
    </location>
</feature>
<feature type="strand" evidence="13">
    <location>
        <begin position="19"/>
        <end position="25"/>
    </location>
</feature>
<feature type="helix" evidence="13">
    <location>
        <begin position="28"/>
        <end position="34"/>
    </location>
</feature>
<feature type="helix" evidence="13">
    <location>
        <begin position="39"/>
        <end position="59"/>
    </location>
</feature>
<feature type="strand" evidence="13">
    <location>
        <begin position="63"/>
        <end position="68"/>
    </location>
</feature>
<feature type="helix" evidence="13">
    <location>
        <begin position="72"/>
        <end position="75"/>
    </location>
</feature>
<feature type="helix" evidence="13">
    <location>
        <begin position="83"/>
        <end position="90"/>
    </location>
</feature>
<feature type="helix" evidence="13">
    <location>
        <begin position="93"/>
        <end position="102"/>
    </location>
</feature>
<feature type="strand" evidence="13">
    <location>
        <begin position="106"/>
        <end position="111"/>
    </location>
</feature>
<feature type="helix" evidence="13">
    <location>
        <begin position="113"/>
        <end position="115"/>
    </location>
</feature>
<feature type="helix" evidence="13">
    <location>
        <begin position="118"/>
        <end position="131"/>
    </location>
</feature>
<feature type="strand" evidence="13">
    <location>
        <begin position="138"/>
        <end position="144"/>
    </location>
</feature>
<feature type="helix" evidence="13">
    <location>
        <begin position="147"/>
        <end position="164"/>
    </location>
</feature>
<feature type="helix" evidence="13">
    <location>
        <begin position="169"/>
        <end position="171"/>
    </location>
</feature>
<feature type="helix" evidence="13">
    <location>
        <begin position="174"/>
        <end position="178"/>
    </location>
</feature>
<feature type="turn" evidence="13">
    <location>
        <begin position="182"/>
        <end position="185"/>
    </location>
</feature>
<feature type="strand" evidence="13">
    <location>
        <begin position="191"/>
        <end position="197"/>
    </location>
</feature>
<feature type="strand" evidence="14">
    <location>
        <begin position="204"/>
        <end position="206"/>
    </location>
</feature>
<feature type="helix" evidence="13">
    <location>
        <begin position="207"/>
        <end position="209"/>
    </location>
</feature>
<feature type="strand" evidence="13">
    <location>
        <begin position="213"/>
        <end position="216"/>
    </location>
</feature>
<feature type="helix" evidence="13">
    <location>
        <begin position="221"/>
        <end position="223"/>
    </location>
</feature>
<feature type="helix" evidence="13">
    <location>
        <begin position="226"/>
        <end position="239"/>
    </location>
</feature>
<keyword id="KW-0002">3D-structure</keyword>
<keyword id="KW-0131">Cell cycle</keyword>
<keyword id="KW-0132">Cell division</keyword>
<keyword id="KW-0133">Cell shape</keyword>
<keyword id="KW-0961">Cell wall biogenesis/degradation</keyword>
<keyword id="KW-0460">Magnesium</keyword>
<keyword id="KW-0479">Metal-binding</keyword>
<keyword id="KW-0573">Peptidoglycan synthesis</keyword>
<keyword id="KW-1185">Reference proteome</keyword>
<keyword id="KW-0808">Transferase</keyword>
<gene>
    <name type="primary">ispU</name>
    <name type="synonym">rth</name>
    <name type="synonym">uppS</name>
    <name type="synonym">yaeS</name>
    <name type="ordered locus">b0174</name>
    <name type="ordered locus">JW0169</name>
</gene>
<name>UPPS_ECOLI</name>
<reference key="1">
    <citation type="submission" date="1996-02" db="EMBL/GenBank/DDBJ databases">
        <title>Systematic sequencing of the Escherichia coli genome: analysis of the 4.0 - 6.0 min (189,987 - 281,416bp) region.</title>
        <authorList>
            <person name="Takemoto K."/>
            <person name="Mori H."/>
            <person name="Murayama N."/>
            <person name="Kataoka K."/>
            <person name="Yano M."/>
            <person name="Itoh T."/>
            <person name="Yamamoto Y."/>
            <person name="Inokuchi H."/>
            <person name="Miki T."/>
            <person name="Hatada E."/>
            <person name="Fukuda R."/>
            <person name="Ichihara S."/>
            <person name="Mizuno T."/>
            <person name="Makino K."/>
            <person name="Nakata A."/>
            <person name="Yura T."/>
            <person name="Sampei G."/>
            <person name="Mizobuchi K."/>
        </authorList>
    </citation>
    <scope>NUCLEOTIDE SEQUENCE [LARGE SCALE GENOMIC DNA]</scope>
    <source>
        <strain>K12 / W3110 / ATCC 27325 / DSM 5911</strain>
    </source>
</reference>
<reference key="2">
    <citation type="submission" date="1997-01" db="EMBL/GenBank/DDBJ databases">
        <title>Sequence of minutes 4-25 of Escherichia coli.</title>
        <authorList>
            <person name="Chung E."/>
            <person name="Allen E."/>
            <person name="Araujo R."/>
            <person name="Aparicio A.M."/>
            <person name="Davis K."/>
            <person name="Duncan M."/>
            <person name="Federspiel N."/>
            <person name="Hyman R."/>
            <person name="Kalman S."/>
            <person name="Komp C."/>
            <person name="Kurdi O."/>
            <person name="Lew H."/>
            <person name="Lin D."/>
            <person name="Namath A."/>
            <person name="Oefner P."/>
            <person name="Roberts D."/>
            <person name="Schramm S."/>
            <person name="Davis R.W."/>
        </authorList>
    </citation>
    <scope>NUCLEOTIDE SEQUENCE [LARGE SCALE GENOMIC DNA]</scope>
    <source>
        <strain>K12 / MG1655 / ATCC 47076</strain>
    </source>
</reference>
<reference key="3">
    <citation type="journal article" date="1997" name="Science">
        <title>The complete genome sequence of Escherichia coli K-12.</title>
        <authorList>
            <person name="Blattner F.R."/>
            <person name="Plunkett G. III"/>
            <person name="Bloch C.A."/>
            <person name="Perna N.T."/>
            <person name="Burland V."/>
            <person name="Riley M."/>
            <person name="Collado-Vides J."/>
            <person name="Glasner J.D."/>
            <person name="Rode C.K."/>
            <person name="Mayhew G.F."/>
            <person name="Gregor J."/>
            <person name="Davis N.W."/>
            <person name="Kirkpatrick H.A."/>
            <person name="Goeden M.A."/>
            <person name="Rose D.J."/>
            <person name="Mau B."/>
            <person name="Shao Y."/>
        </authorList>
    </citation>
    <scope>NUCLEOTIDE SEQUENCE [LARGE SCALE GENOMIC DNA]</scope>
    <source>
        <strain>K12 / MG1655 / ATCC 47076</strain>
    </source>
</reference>
<reference key="4">
    <citation type="journal article" date="2006" name="Mol. Syst. Biol.">
        <title>Highly accurate genome sequences of Escherichia coli K-12 strains MG1655 and W3110.</title>
        <authorList>
            <person name="Hayashi K."/>
            <person name="Morooka N."/>
            <person name="Yamamoto Y."/>
            <person name="Fujita K."/>
            <person name="Isono K."/>
            <person name="Choi S."/>
            <person name="Ohtsubo E."/>
            <person name="Baba T."/>
            <person name="Wanner B.L."/>
            <person name="Mori H."/>
            <person name="Horiuchi T."/>
        </authorList>
    </citation>
    <scope>NUCLEOTIDE SEQUENCE [LARGE SCALE GENOMIC DNA]</scope>
    <source>
        <strain>K12 / W3110 / ATCC 27325 / DSM 5911</strain>
    </source>
</reference>
<reference key="5">
    <citation type="journal article" date="1999" name="J. Bacteriol.">
        <title>Use of genomics to identify bacterial undecaprenyl pyrophosphate synthetase: cloning, expression, and characterization of the essential uppS gene.</title>
        <authorList>
            <person name="Apfel C.M."/>
            <person name="Takacs B."/>
            <person name="Fountoulakis M."/>
            <person name="Stieger M."/>
            <person name="Keck W."/>
        </authorList>
    </citation>
    <scope>CHARACTERIZATION</scope>
</reference>
<reference key="6">
    <citation type="journal article" date="1999" name="J. Bacteriol.">
        <title>The Escherichia coli homologue of yeast RER2, a key enzyme of dolichol synthesis, is essential for carrier lipid formation in bacterial cell wall synthesis.</title>
        <authorList>
            <person name="Kato J."/>
            <person name="Fujisaki S."/>
            <person name="Nakajima K."/>
            <person name="Nishimura Y."/>
            <person name="Sato M."/>
            <person name="Nakano A."/>
        </authorList>
    </citation>
    <scope>CHARACTERIZATION</scope>
</reference>
<reference key="7">
    <citation type="journal article" date="2000" name="Biochemistry">
        <title>Effect of site-directed mutagenesis of the conserved aspartate and glutamate on E. coli undecaprenyl pyrophosphate synthase catalysis.</title>
        <authorList>
            <person name="Pan J.-J."/>
            <person name="Yang L.-W."/>
            <person name="Liang P.-H."/>
        </authorList>
    </citation>
    <scope>MUTAGENESIS OF ASP-26; GLU-73; ASP-150; ASP-190; GLU-198; GLU-213; ASP-218 AND ASP-223</scope>
</reference>
<reference key="8">
    <citation type="journal article" date="2002" name="J. Biol. Chem.">
        <title>Probing the conformational change of Escherichia coli undecaprenyl pyrophosphate synthase during catalysis using an inhibitor and tryptophan mutants.</title>
        <authorList>
            <person name="Chen Y.-H."/>
            <person name="Chen A.P.-C."/>
            <person name="Chen C.-T."/>
            <person name="Wang A.H.-J."/>
            <person name="Liang P.-H."/>
        </authorList>
    </citation>
    <scope>MUTAGENESIS OF TRP-31; TRP-75; TRP-91; TRP-149; TRP-207 AND TRP-221</scope>
</reference>
<reference key="9">
    <citation type="journal article" date="2010" name="Biochem. Biophys. Res. Commun.">
        <title>Mechanism of cis-prenyltransferase reaction probed by substrate analogues.</title>
        <authorList>
            <person name="Lu Y.P."/>
            <person name="Liu H.G."/>
            <person name="Teng K.H."/>
            <person name="Liang P.H."/>
        </authorList>
    </citation>
    <scope>REACTION MECHANISM</scope>
</reference>
<reference key="10">
    <citation type="journal article" date="2001" name="J. Biol. Chem.">
        <title>Mechanism of product chain length determination and the role of a flexible loop in Escherichia coli undecaprenyl-pyrophosphate synthase catalysis.</title>
        <authorList>
            <person name="Ko T.-P."/>
            <person name="Chen Y.-K."/>
            <person name="Robinson H."/>
            <person name="Tsai P.-C."/>
            <person name="Gao Y.-G."/>
            <person name="Chen A.P.-C."/>
            <person name="Wang A.H.-J."/>
            <person name="Liang P.-H."/>
        </authorList>
    </citation>
    <scope>X-RAY CRYSTALLOGRAPHY (1.8 ANGSTROMS) OF 13-240</scope>
    <scope>MUTAGENESIS OF ILE-62; ALA-69; SER-71; GLU-73; ASN-74; TRP-75; ARG-77; GLU-81; HIS-103; VAL-105; LEU-137 AND ALA-143</scope>
    <scope>SUBUNIT</scope>
</reference>
<reference key="11">
    <citation type="journal article" date="2003" name="J. Biol. Chem.">
        <title>Catalytic mechanism revealed by the crystal structure of undecaprenyl pyrophosphate synthase in complex with sulfate, magnesium, and triton.</title>
        <authorList>
            <person name="Chang S.-Y."/>
            <person name="Ko T.-P."/>
            <person name="Liang P.-H."/>
            <person name="Wang A.H.-J."/>
        </authorList>
    </citation>
    <scope>X-RAY CRYSTALLOGRAPHY (1.73 ANGSTROMS) OF 13-240 IN COMPLEX WITH SUBSTRATES ANALOGS AND MAGNESIUM IONS</scope>
    <scope>FUNCTION AS AN UNDECAPRENYL DIPHOSPHATE SYNTHASE</scope>
    <scope>MUTAGENESIS OF HIS-43; HIS-199 AND GLU-213</scope>
    <scope>BIOPHYSICOCHEMICAL PROPERTIES</scope>
    <scope>COFACTOR</scope>
    <scope>SUBUNIT</scope>
</reference>
<reference key="12">
    <citation type="journal article" date="2004" name="Protein Sci.">
        <title>Substrate binding mode and reaction mechanism of undecaprenyl pyrophosphate synthase deduced from crystallographic studies.</title>
        <authorList>
            <person name="Chang S.Y."/>
            <person name="Ko T.P."/>
            <person name="Chen A.P."/>
            <person name="Wang A.H."/>
            <person name="Liang P.H."/>
        </authorList>
    </citation>
    <scope>X-RAY CRYSTALLOGRAPHY (2.35 ANGSTROMS) IN COMPLEX WITH SUBSTRATE</scope>
    <scope>COFACTOR</scope>
    <scope>SUBUNIT</scope>
</reference>
<reference key="13">
    <citation type="journal article" date="2005" name="J. Biol. Chem.">
        <title>Crystal structures of undecaprenyl pyrophosphate synthase in complex with magnesium, isopentenyl pyrophosphate, and farnesyl thiopyrophosphate: roles of the metal ion and conserved residues in catalysis.</title>
        <authorList>
            <person name="Guo R.T."/>
            <person name="Ko T.P."/>
            <person name="Chen A.P."/>
            <person name="Kuo C.J."/>
            <person name="Wang A.H."/>
            <person name="Liang P.H."/>
        </authorList>
    </citation>
    <scope>X-RAY CRYSTALLOGRAPHY (1.9 ANGSTROMS) OF WILD-TYPE AND OF MUTANT ALA-26 IN COMPLEX WITH SUBSTRATE ANALOGS AND MAGNESIUM IONS</scope>
</reference>
<reference key="14">
    <citation type="journal article" date="2007" name="Proc. Natl. Acad. Sci. U.S.A.">
        <title>Bisphosphonates target multiple sites in both cis- and trans-prenyltransferases.</title>
        <authorList>
            <person name="Guo R.-T."/>
            <person name="Cao R."/>
            <person name="Liang P.-H."/>
            <person name="Ko T.-P."/>
            <person name="Chang T.-H."/>
            <person name="Hudock M.P."/>
            <person name="Jeng W.-Y."/>
            <person name="Chen C.K.-M."/>
            <person name="Zhang Y."/>
            <person name="Song Y."/>
            <person name="Kuo C.-J."/>
            <person name="Yin F."/>
            <person name="Oldfield E."/>
            <person name="Wang A.H.-J."/>
        </authorList>
    </citation>
    <scope>X-RAY CRYSTALLOGRAPHY (1.9 ANGSTROMS) IN COMPLEX WITH SUBSTRATE ANALOGS</scope>
    <scope>ACTIVITY REGULATION</scope>
    <scope>SUBUNIT</scope>
</reference>
<reference key="15">
    <citation type="journal article" date="2011" name="Chem. Biol. Drug Des.">
        <title>Applying molecular dynamics simulations to identify rarely sampled ligand-bound conformational states of undecaprenyl pyrophosphate synthase, an antibacterial target.</title>
        <authorList>
            <person name="Sinko W."/>
            <person name="de Oliveira C."/>
            <person name="Williams S."/>
            <person name="Van Wynsberghe A."/>
            <person name="Durrant J.D."/>
            <person name="Cao R."/>
            <person name="Oldfield E."/>
            <person name="McCammon J.A."/>
        </authorList>
    </citation>
    <scope>X-RAY CRYSTALLOGRAPHY (1.7 ANGSTROMS)</scope>
    <scope>SUBUNIT</scope>
</reference>
<evidence type="ECO:0000250" key="1"/>
<evidence type="ECO:0000269" key="2">
    <source>
    </source>
</evidence>
<evidence type="ECO:0000269" key="3">
    <source>
    </source>
</evidence>
<evidence type="ECO:0000269" key="4">
    <source>
    </source>
</evidence>
<evidence type="ECO:0000269" key="5">
    <source>
    </source>
</evidence>
<evidence type="ECO:0000269" key="6">
    <source>
    </source>
</evidence>
<evidence type="ECO:0000269" key="7">
    <source>
    </source>
</evidence>
<evidence type="ECO:0000269" key="8">
    <source>
    </source>
</evidence>
<evidence type="ECO:0000269" key="9">
    <source>
    </source>
</evidence>
<evidence type="ECO:0000305" key="10"/>
<evidence type="ECO:0000305" key="11">
    <source>
    </source>
</evidence>
<evidence type="ECO:0007829" key="12">
    <source>
        <dbReference type="PDB" id="1X09"/>
    </source>
</evidence>
<evidence type="ECO:0007829" key="13">
    <source>
        <dbReference type="PDB" id="3SGV"/>
    </source>
</evidence>
<evidence type="ECO:0007829" key="14">
    <source>
        <dbReference type="PDB" id="3WYJ"/>
    </source>
</evidence>
<organism>
    <name type="scientific">Escherichia coli (strain K12)</name>
    <dbReference type="NCBI Taxonomy" id="83333"/>
    <lineage>
        <taxon>Bacteria</taxon>
        <taxon>Pseudomonadati</taxon>
        <taxon>Pseudomonadota</taxon>
        <taxon>Gammaproteobacteria</taxon>
        <taxon>Enterobacterales</taxon>
        <taxon>Enterobacteriaceae</taxon>
        <taxon>Escherichia</taxon>
    </lineage>
</organism>
<accession>P60472</accession>
<accession>P75668</accession>
<accession>Q47675</accession>
<accession>Q9R2E4</accession>
<protein>
    <recommendedName>
        <fullName>Ditrans,polycis-undecaprenyl-diphosphate synthase ((2E,6E)-farnesyl-diphosphate specific)</fullName>
        <ecNumber>2.5.1.31</ecNumber>
    </recommendedName>
    <alternativeName>
        <fullName>Ditrans,polycis-undecaprenylcistransferase</fullName>
    </alternativeName>
    <alternativeName>
        <fullName>Undecaprenyl diphosphate synthase</fullName>
        <shortName>UDS</shortName>
    </alternativeName>
    <alternativeName>
        <fullName>Undecaprenyl pyrophosphate synthase</fullName>
        <shortName>UPP synthase</shortName>
    </alternativeName>
</protein>